<accession>Q2A121</accession>
<keyword id="KW-0007">Acetylation</keyword>
<keyword id="KW-0963">Cytoplasm</keyword>
<keyword id="KW-0223">Dioxygenase</keyword>
<keyword id="KW-0408">Iron</keyword>
<keyword id="KW-0479">Metal-binding</keyword>
<keyword id="KW-0539">Nucleus</keyword>
<keyword id="KW-0560">Oxidoreductase</keyword>
<keyword id="KW-1185">Reference proteome</keyword>
<gene>
    <name evidence="5 7" type="primary">Fto</name>
</gene>
<proteinExistence type="evidence at transcript level"/>
<dbReference type="EC" id="1.14.11.-" evidence="2"/>
<dbReference type="EC" id="1.14.11.53" evidence="2"/>
<dbReference type="EMBL" id="AM233906">
    <property type="protein sequence ID" value="CAJ80872.1"/>
    <property type="molecule type" value="mRNA"/>
</dbReference>
<dbReference type="RefSeq" id="NP_001034802.1">
    <property type="nucleotide sequence ID" value="NM_001039713.1"/>
</dbReference>
<dbReference type="SMR" id="Q2A121"/>
<dbReference type="FunCoup" id="Q2A121">
    <property type="interactions" value="3097"/>
</dbReference>
<dbReference type="STRING" id="10116.ENSRNOP00000073704"/>
<dbReference type="PhosphoSitePlus" id="Q2A121"/>
<dbReference type="jPOST" id="Q2A121"/>
<dbReference type="PaxDb" id="10116-ENSRNOP00000015718"/>
<dbReference type="Ensembl" id="ENSRNOT00000015718.7">
    <property type="protein sequence ID" value="ENSRNOP00000015718.4"/>
    <property type="gene ID" value="ENSRNOG00000011728.7"/>
</dbReference>
<dbReference type="GeneID" id="291905"/>
<dbReference type="KEGG" id="rno:291905"/>
<dbReference type="AGR" id="RGD:1305121"/>
<dbReference type="CTD" id="79068"/>
<dbReference type="RGD" id="1305121">
    <property type="gene designation" value="Fto"/>
</dbReference>
<dbReference type="eggNOG" id="ENOG502QR31">
    <property type="taxonomic scope" value="Eukaryota"/>
</dbReference>
<dbReference type="GeneTree" id="ENSGT00390000017730"/>
<dbReference type="HOGENOM" id="CLU_041676_0_0_1"/>
<dbReference type="InParanoid" id="Q2A121"/>
<dbReference type="OrthoDB" id="41259at9989"/>
<dbReference type="PhylomeDB" id="Q2A121"/>
<dbReference type="TreeFam" id="TF333296"/>
<dbReference type="Reactome" id="R-RNO-73943">
    <property type="pathway name" value="Reversal of alkylation damage by DNA dioxygenases"/>
</dbReference>
<dbReference type="PRO" id="PR:Q2A121"/>
<dbReference type="Proteomes" id="UP000002494">
    <property type="component" value="Chromosome 19"/>
</dbReference>
<dbReference type="Bgee" id="ENSRNOG00000011728">
    <property type="expression patterns" value="Expressed in cerebellum and 19 other cell types or tissues"/>
</dbReference>
<dbReference type="ExpressionAtlas" id="Q2A121">
    <property type="expression patterns" value="baseline and differential"/>
</dbReference>
<dbReference type="GO" id="GO:0005737">
    <property type="term" value="C:cytoplasm"/>
    <property type="evidence" value="ECO:0000250"/>
    <property type="project" value="UniProtKB"/>
</dbReference>
<dbReference type="GO" id="GO:0016607">
    <property type="term" value="C:nuclear speck"/>
    <property type="evidence" value="ECO:0000250"/>
    <property type="project" value="UniProtKB"/>
</dbReference>
<dbReference type="GO" id="GO:0005634">
    <property type="term" value="C:nucleus"/>
    <property type="evidence" value="ECO:0000250"/>
    <property type="project" value="UniProtKB"/>
</dbReference>
<dbReference type="GO" id="GO:0016706">
    <property type="term" value="F:2-oxoglutarate-dependent dioxygenase activity"/>
    <property type="evidence" value="ECO:0000266"/>
    <property type="project" value="RGD"/>
</dbReference>
<dbReference type="GO" id="GO:0035516">
    <property type="term" value="F:broad specificity oxidative DNA demethylase activity"/>
    <property type="evidence" value="ECO:0000250"/>
    <property type="project" value="UniProtKB"/>
</dbReference>
<dbReference type="GO" id="GO:0008198">
    <property type="term" value="F:ferrous iron binding"/>
    <property type="evidence" value="ECO:0000250"/>
    <property type="project" value="UniProtKB"/>
</dbReference>
<dbReference type="GO" id="GO:1990931">
    <property type="term" value="F:mRNA N6-methyladenosine dioxygenase activity"/>
    <property type="evidence" value="ECO:0000250"/>
    <property type="project" value="UniProtKB"/>
</dbReference>
<dbReference type="GO" id="GO:0035515">
    <property type="term" value="F:oxidative RNA demethylase activity"/>
    <property type="evidence" value="ECO:0000250"/>
    <property type="project" value="UniProtKB"/>
</dbReference>
<dbReference type="GO" id="GO:1990984">
    <property type="term" value="F:tRNA demethylase activity"/>
    <property type="evidence" value="ECO:0000250"/>
    <property type="project" value="UniProtKB"/>
</dbReference>
<dbReference type="GO" id="GO:0060612">
    <property type="term" value="P:adipose tissue development"/>
    <property type="evidence" value="ECO:0000266"/>
    <property type="project" value="RGD"/>
</dbReference>
<dbReference type="GO" id="GO:0006307">
    <property type="term" value="P:DNA alkylation repair"/>
    <property type="evidence" value="ECO:0000266"/>
    <property type="project" value="RGD"/>
</dbReference>
<dbReference type="GO" id="GO:0007507">
    <property type="term" value="P:heart development"/>
    <property type="evidence" value="ECO:0000270"/>
    <property type="project" value="RGD"/>
</dbReference>
<dbReference type="GO" id="GO:0061157">
    <property type="term" value="P:mRNA destabilization"/>
    <property type="evidence" value="ECO:0000250"/>
    <property type="project" value="UniProtKB"/>
</dbReference>
<dbReference type="GO" id="GO:1903999">
    <property type="term" value="P:negative regulation of eating behavior"/>
    <property type="evidence" value="ECO:0000315"/>
    <property type="project" value="RGD"/>
</dbReference>
<dbReference type="GO" id="GO:0001649">
    <property type="term" value="P:osteoblast differentiation"/>
    <property type="evidence" value="ECO:0000315"/>
    <property type="project" value="RGD"/>
</dbReference>
<dbReference type="GO" id="GO:0043065">
    <property type="term" value="P:positive regulation of apoptotic process"/>
    <property type="evidence" value="ECO:0000315"/>
    <property type="project" value="RGD"/>
</dbReference>
<dbReference type="GO" id="GO:0035774">
    <property type="term" value="P:positive regulation of insulin secretion involved in cellular response to glucose stimulus"/>
    <property type="evidence" value="ECO:0000315"/>
    <property type="project" value="RGD"/>
</dbReference>
<dbReference type="GO" id="GO:0090335">
    <property type="term" value="P:regulation of brown fat cell differentiation"/>
    <property type="evidence" value="ECO:0000266"/>
    <property type="project" value="RGD"/>
</dbReference>
<dbReference type="GO" id="GO:0051480">
    <property type="term" value="P:regulation of cytosolic calcium ion concentration"/>
    <property type="evidence" value="ECO:0000315"/>
    <property type="project" value="RGD"/>
</dbReference>
<dbReference type="GO" id="GO:0010883">
    <property type="term" value="P:regulation of lipid storage"/>
    <property type="evidence" value="ECO:0000266"/>
    <property type="project" value="RGD"/>
</dbReference>
<dbReference type="GO" id="GO:0040014">
    <property type="term" value="P:regulation of multicellular organism growth"/>
    <property type="evidence" value="ECO:0000266"/>
    <property type="project" value="RGD"/>
</dbReference>
<dbReference type="GO" id="GO:0044065">
    <property type="term" value="P:regulation of respiratory system process"/>
    <property type="evidence" value="ECO:0000266"/>
    <property type="project" value="RGD"/>
</dbReference>
<dbReference type="GO" id="GO:0070350">
    <property type="term" value="P:regulation of white fat cell proliferation"/>
    <property type="evidence" value="ECO:0000266"/>
    <property type="project" value="RGD"/>
</dbReference>
<dbReference type="GO" id="GO:1903925">
    <property type="term" value="P:response to bisphenol A"/>
    <property type="evidence" value="ECO:0000270"/>
    <property type="project" value="RGD"/>
</dbReference>
<dbReference type="GO" id="GO:0031667">
    <property type="term" value="P:response to nutrient levels"/>
    <property type="evidence" value="ECO:0000270"/>
    <property type="project" value="RGD"/>
</dbReference>
<dbReference type="GO" id="GO:0042245">
    <property type="term" value="P:RNA repair"/>
    <property type="evidence" value="ECO:0000266"/>
    <property type="project" value="RGD"/>
</dbReference>
<dbReference type="GO" id="GO:0019233">
    <property type="term" value="P:sensory perception of pain"/>
    <property type="evidence" value="ECO:0000315"/>
    <property type="project" value="RGD"/>
</dbReference>
<dbReference type="GO" id="GO:0016180">
    <property type="term" value="P:snRNA processing"/>
    <property type="evidence" value="ECO:0000266"/>
    <property type="project" value="RGD"/>
</dbReference>
<dbReference type="GO" id="GO:0001659">
    <property type="term" value="P:temperature homeostasis"/>
    <property type="evidence" value="ECO:0000266"/>
    <property type="project" value="RGD"/>
</dbReference>
<dbReference type="FunFam" id="1.20.58.1470:FF:000001">
    <property type="entry name" value="FTO, alpha-ketoglutarate dependent dioxygenase"/>
    <property type="match status" value="1"/>
</dbReference>
<dbReference type="FunFam" id="2.60.120.590:FF:000001">
    <property type="entry name" value="FTO, alpha-ketoglutarate dependent dioxygenase"/>
    <property type="match status" value="1"/>
</dbReference>
<dbReference type="Gene3D" id="2.60.120.590">
    <property type="entry name" value="Alpha-ketoglutarate-dependent dioxygenase AlkB-like"/>
    <property type="match status" value="1"/>
</dbReference>
<dbReference type="Gene3D" id="1.20.58.1470">
    <property type="entry name" value="FTO C-terminal domain"/>
    <property type="match status" value="1"/>
</dbReference>
<dbReference type="InterPro" id="IPR037151">
    <property type="entry name" value="AlkB-like_sf"/>
</dbReference>
<dbReference type="InterPro" id="IPR032868">
    <property type="entry name" value="FTO"/>
</dbReference>
<dbReference type="InterPro" id="IPR024366">
    <property type="entry name" value="FTO_C"/>
</dbReference>
<dbReference type="InterPro" id="IPR038413">
    <property type="entry name" value="FTO_C_sf"/>
</dbReference>
<dbReference type="InterPro" id="IPR024367">
    <property type="entry name" value="FTO_cat_dom"/>
</dbReference>
<dbReference type="PANTHER" id="PTHR31291">
    <property type="entry name" value="ALPHA-KETOGLUTARATE-DEPENDENT DIOXYGENASE FTO"/>
    <property type="match status" value="1"/>
</dbReference>
<dbReference type="PANTHER" id="PTHR31291:SF2">
    <property type="entry name" value="ALPHA-KETOGLUTARATE-DEPENDENT DIOXYGENASE FTO"/>
    <property type="match status" value="1"/>
</dbReference>
<dbReference type="Pfam" id="PF12934">
    <property type="entry name" value="FTO_CTD"/>
    <property type="match status" value="1"/>
</dbReference>
<dbReference type="Pfam" id="PF12933">
    <property type="entry name" value="FTO_NTD"/>
    <property type="match status" value="1"/>
</dbReference>
<dbReference type="SMART" id="SM01223">
    <property type="entry name" value="FTO_NTD"/>
    <property type="match status" value="1"/>
</dbReference>
<reference key="1">
    <citation type="journal article" date="2007" name="Int. J. Mol. Med.">
        <title>Expression of phosphoproteins and amelotin in teeth.</title>
        <authorList>
            <person name="Trueb B."/>
            <person name="Taeschler S."/>
            <person name="Schild C."/>
            <person name="Lang N.P."/>
        </authorList>
    </citation>
    <scope>NUCLEOTIDE SEQUENCE [MRNA]</scope>
    <scope>TISSUE SPECIFICITY</scope>
    <source>
        <strain>Wistar</strain>
    </source>
</reference>
<reference key="2">
    <citation type="journal article" date="2008" name="Endocrinology">
        <title>The obesity gene, FTO, is of ancient origin, up-regulated during food deprivation and expressed in neurons of feeding-related nuclei of the brain.</title>
        <authorList>
            <person name="Fredriksson R."/>
            <person name="Hagglund M."/>
            <person name="Olszewski P.K."/>
            <person name="Stephansson O."/>
            <person name="Jacobsson J.A."/>
            <person name="Olszewska A.M."/>
            <person name="Levine A.S."/>
            <person name="Lindblom J."/>
            <person name="Schioth H.B."/>
        </authorList>
    </citation>
    <scope>INDUCTION BY FASTING</scope>
    <scope>TISSUE SPECIFICITY</scope>
</reference>
<name>FTO_RAT</name>
<protein>
    <recommendedName>
        <fullName evidence="6">Alpha-ketoglutarate-dependent dioxygenase FTO</fullName>
    </recommendedName>
    <alternativeName>
        <fullName evidence="5">Fat mass and obesity-associated protein</fullName>
    </alternativeName>
    <alternativeName>
        <fullName evidence="6">U6 small nuclear RNA (2'-O-methyladenosine-N(6)-)-demethylase FTO</fullName>
        <ecNumber evidence="2">1.14.11.-</ecNumber>
    </alternativeName>
    <alternativeName>
        <fullName evidence="6">U6 small nuclear RNA N(6)-methyladenosine-demethylase FTO</fullName>
        <ecNumber evidence="2">1.14.11.-</ecNumber>
    </alternativeName>
    <alternativeName>
        <fullName evidence="6">mRNA (2'-O-methyladenosine-N(6)-)-demethylase FTO</fullName>
        <shortName evidence="6">m6A(m)-demethylase FTO</shortName>
        <ecNumber evidence="2">1.14.11.-</ecNumber>
    </alternativeName>
    <alternativeName>
        <fullName evidence="6">mRNA N(6)-methyladenosine demethylase FTO</fullName>
        <ecNumber evidence="2">1.14.11.53</ecNumber>
    </alternativeName>
    <alternativeName>
        <fullName evidence="6">tRNA N1-methyl adenine demethylase FTO</fullName>
        <ecNumber evidence="2">1.14.11.-</ecNumber>
    </alternativeName>
</protein>
<organism>
    <name type="scientific">Rattus norvegicus</name>
    <name type="common">Rat</name>
    <dbReference type="NCBI Taxonomy" id="10116"/>
    <lineage>
        <taxon>Eukaryota</taxon>
        <taxon>Metazoa</taxon>
        <taxon>Chordata</taxon>
        <taxon>Craniata</taxon>
        <taxon>Vertebrata</taxon>
        <taxon>Euteleostomi</taxon>
        <taxon>Mammalia</taxon>
        <taxon>Eutheria</taxon>
        <taxon>Euarchontoglires</taxon>
        <taxon>Glires</taxon>
        <taxon>Rodentia</taxon>
        <taxon>Myomorpha</taxon>
        <taxon>Muroidea</taxon>
        <taxon>Muridae</taxon>
        <taxon>Murinae</taxon>
        <taxon>Rattus</taxon>
    </lineage>
</organism>
<feature type="chain" id="PRO_0000286166" description="Alpha-ketoglutarate-dependent dioxygenase FTO">
    <location>
        <begin position="1"/>
        <end position="502"/>
    </location>
</feature>
<feature type="region of interest" description="Fe2OG dioxygenase domain" evidence="2">
    <location>
        <begin position="32"/>
        <end position="324"/>
    </location>
</feature>
<feature type="region of interest" description="Loop L1; predicted to block binding of double-stranded DNA or RNA" evidence="2">
    <location>
        <begin position="210"/>
        <end position="221"/>
    </location>
</feature>
<feature type="binding site" evidence="2">
    <location>
        <position position="96"/>
    </location>
    <ligand>
        <name>substrate</name>
    </ligand>
</feature>
<feature type="binding site" evidence="2">
    <location>
        <position position="108"/>
    </location>
    <ligand>
        <name>substrate</name>
    </ligand>
</feature>
<feature type="binding site" evidence="2">
    <location>
        <position position="202"/>
    </location>
    <ligand>
        <name>2-oxoglutarate</name>
        <dbReference type="ChEBI" id="CHEBI:16810"/>
    </ligand>
</feature>
<feature type="binding site" evidence="2">
    <location>
        <begin position="228"/>
        <end position="231"/>
    </location>
    <ligand>
        <name>substrate</name>
    </ligand>
</feature>
<feature type="binding site" evidence="2">
    <location>
        <position position="228"/>
    </location>
    <ligand>
        <name>Fe cation</name>
        <dbReference type="ChEBI" id="CHEBI:24875"/>
        <note>catalytic</note>
    </ligand>
</feature>
<feature type="binding site" evidence="2">
    <location>
        <position position="230"/>
    </location>
    <ligand>
        <name>Fe cation</name>
        <dbReference type="ChEBI" id="CHEBI:24875"/>
        <note>catalytic</note>
    </ligand>
</feature>
<feature type="binding site" evidence="2">
    <location>
        <position position="292"/>
    </location>
    <ligand>
        <name>2-oxoglutarate</name>
        <dbReference type="ChEBI" id="CHEBI:16810"/>
    </ligand>
</feature>
<feature type="binding site" evidence="2">
    <location>
        <position position="304"/>
    </location>
    <ligand>
        <name>Fe cation</name>
        <dbReference type="ChEBI" id="CHEBI:24875"/>
        <note>catalytic</note>
    </ligand>
</feature>
<feature type="binding site" evidence="2">
    <location>
        <begin position="313"/>
        <end position="315"/>
    </location>
    <ligand>
        <name>2-oxoglutarate</name>
        <dbReference type="ChEBI" id="CHEBI:16810"/>
    </ligand>
</feature>
<feature type="binding site" evidence="2">
    <location>
        <position position="317"/>
    </location>
    <ligand>
        <name>2-oxoglutarate</name>
        <dbReference type="ChEBI" id="CHEBI:16810"/>
    </ligand>
</feature>
<feature type="binding site" evidence="2">
    <location>
        <position position="319"/>
    </location>
    <ligand>
        <name>2-oxoglutarate</name>
        <dbReference type="ChEBI" id="CHEBI:16810"/>
    </ligand>
</feature>
<feature type="modified residue" description="N6-acetyllysine" evidence="2">
    <location>
        <position position="213"/>
    </location>
</feature>
<evidence type="ECO:0000250" key="1">
    <source>
        <dbReference type="UniProtKB" id="Q8BGW1"/>
    </source>
</evidence>
<evidence type="ECO:0000250" key="2">
    <source>
        <dbReference type="UniProtKB" id="Q9C0B1"/>
    </source>
</evidence>
<evidence type="ECO:0000269" key="3">
    <source>
    </source>
</evidence>
<evidence type="ECO:0000269" key="4">
    <source>
    </source>
</evidence>
<evidence type="ECO:0000303" key="5">
    <source>
    </source>
</evidence>
<evidence type="ECO:0000305" key="6"/>
<evidence type="ECO:0000312" key="7">
    <source>
        <dbReference type="RGD" id="1305121"/>
    </source>
</evidence>
<sequence>MKRVQTAEEREREAKKLRLLEELEDTWLPYLTPKDDEFYQQWQLKYPKLVFREAGSIPEELHKEVPEAFLTLHKHGCLFRDLVRIQGKDVLTPVSRILIGDPGCTYKYLNTRLFTVPWPVKGCTINYTEAEIAAACQTFLKLNDYLQVETIQALEELAIKEKANEDAVPLCMAEFPRAGVGPSCDDEVDLKSRAAYNVTLLNFMDPQKMPYLKEEPYFGMGKMAVSWHHDENLVDRSAVAVYSYSCEGSEDESDDESSFEGRDPDTWHVGFKISWDIETPGLTIPLHQGDCYFMLDDLNATHQHCVLAGSQPRFSSTHRVAECSTGTLDYILQRCQLALQNVLNDSDNGDVSLKSFEPAVLKQGEEIHNEVEFEWLRQFWFQGNRYKICTDWWCEPMTQLEGLWKKMESVTNAVLREVKREGLSVEQRSEILSAVLIPLTMRQNLRKEWHARCQARVVRTLPAQQKPDCRPYWEKDDPSMPLPFDLTDVVSEIRSQLLEARS</sequence>
<comment type="function">
    <text evidence="1 2">RNA demethylase that mediates oxidative demethylation of different RNA species, such as mRNAs, tRNAs and snRNAs, and acts as a regulator of fat mass, adipogenesis and energy homeostasis. Specifically demethylates N(6)-methyladenosine (m6A) RNA, the most prevalent internal modification of messenger RNA (mRNA) in higher eukaryotes. M6A demethylation by FTO affects mRNA expression and stability. Also able to demethylate m6A in U6 small nuclear RNA (snRNA). Mediates demethylation of N(6),2'-O-dimethyladenosine cap (m6A(m)), by demethylating the N(6)-methyladenosine at the second transcribed position of mRNAs and U6 snRNA. Demethylation of m6A(m) in the 5'-cap by FTO affects mRNA stability by promoting susceptibility to decapping. Also acts as a tRNA demethylase by removing N(1)-methyladenine from various tRNAs. Has no activity towards 1-methylguanine. Has no detectable activity towards double-stranded DNA. Also able to repair alkylated DNA and RNA by oxidative demethylation: demethylates single-stranded RNA containing 3-methyluracil, single-stranded DNA containing 3-methylthymine and has low demethylase activity towards single-stranded DNA containing 1-methyladenine or 3-methylcytosine. Ability to repair alkylated DNA and RNA is however unsure in vivo. Involved in the regulation of fat mass, adipogenesis and body weight, thereby contributing to the regulation of body size and body fat accumulation. Involved in the regulation of thermogenesis and the control of adipocyte differentiation into brown or white fat cells (By similarity). Regulates activity of the dopaminergic midbrain circuitry via its ability to demethylate m6A in mRNAs (By similarity).</text>
</comment>
<comment type="catalytic activity">
    <reaction evidence="2">
        <text>a 5'-end (N(7)-methyl 5'-triphosphoguanosine)-(N(6),2'-O-dimethyladenosine) in mRNA + 2-oxoglutarate + O2 = a 5'-end (N(7)-methyl 5'-triphosphoguanosine)-(2'-O-methyladenosine) in mRNA + formaldehyde + succinate + CO2</text>
        <dbReference type="Rhea" id="RHEA:57896"/>
        <dbReference type="Rhea" id="RHEA-COMP:11518"/>
        <dbReference type="Rhea" id="RHEA-COMP:11519"/>
        <dbReference type="ChEBI" id="CHEBI:15379"/>
        <dbReference type="ChEBI" id="CHEBI:16526"/>
        <dbReference type="ChEBI" id="CHEBI:16810"/>
        <dbReference type="ChEBI" id="CHEBI:16842"/>
        <dbReference type="ChEBI" id="CHEBI:30031"/>
        <dbReference type="ChEBI" id="CHEBI:85958"/>
        <dbReference type="ChEBI" id="CHEBI:85959"/>
    </reaction>
</comment>
<comment type="catalytic activity">
    <reaction evidence="2">
        <text>an N(6)-methyladenosine in mRNA + 2-oxoglutarate + O2 = an adenosine in mRNA + formaldehyde + succinate + CO2</text>
        <dbReference type="Rhea" id="RHEA:49520"/>
        <dbReference type="Rhea" id="RHEA-COMP:12414"/>
        <dbReference type="Rhea" id="RHEA-COMP:12417"/>
        <dbReference type="ChEBI" id="CHEBI:15379"/>
        <dbReference type="ChEBI" id="CHEBI:16526"/>
        <dbReference type="ChEBI" id="CHEBI:16810"/>
        <dbReference type="ChEBI" id="CHEBI:16842"/>
        <dbReference type="ChEBI" id="CHEBI:30031"/>
        <dbReference type="ChEBI" id="CHEBI:74411"/>
        <dbReference type="ChEBI" id="CHEBI:74449"/>
        <dbReference type="EC" id="1.14.11.53"/>
    </reaction>
</comment>
<comment type="catalytic activity">
    <reaction evidence="2">
        <text>N(6)-methyladenosine in U6 snRNA + 2-oxoglutarate + O2 = adenosine in U6 snRNA + formaldehyde + succinate + CO2</text>
        <dbReference type="Rhea" id="RHEA:57900"/>
        <dbReference type="Rhea" id="RHEA-COMP:13573"/>
        <dbReference type="Rhea" id="RHEA-COMP:13574"/>
        <dbReference type="ChEBI" id="CHEBI:15379"/>
        <dbReference type="ChEBI" id="CHEBI:16526"/>
        <dbReference type="ChEBI" id="CHEBI:16810"/>
        <dbReference type="ChEBI" id="CHEBI:16842"/>
        <dbReference type="ChEBI" id="CHEBI:30031"/>
        <dbReference type="ChEBI" id="CHEBI:74411"/>
        <dbReference type="ChEBI" id="CHEBI:74449"/>
    </reaction>
</comment>
<comment type="catalytic activity">
    <reaction evidence="2">
        <text>a 5'-end (N(7)-methyl 5'-triphosphoguanosine)-(N(6),2'-O-dimethyladenosine) in U6 snRNA + 2-oxoglutarate + O2 = a 5'-end (N(7)-methyl 5'-triphosphoguanosine)-(2'-O-methyladenosine) in U6 snRNA + formaldehyde + succinate + CO2</text>
        <dbReference type="Rhea" id="RHEA:57904"/>
        <dbReference type="Rhea" id="RHEA-COMP:15030"/>
        <dbReference type="Rhea" id="RHEA-COMP:15031"/>
        <dbReference type="ChEBI" id="CHEBI:15379"/>
        <dbReference type="ChEBI" id="CHEBI:16526"/>
        <dbReference type="ChEBI" id="CHEBI:16810"/>
        <dbReference type="ChEBI" id="CHEBI:16842"/>
        <dbReference type="ChEBI" id="CHEBI:30031"/>
        <dbReference type="ChEBI" id="CHEBI:85958"/>
        <dbReference type="ChEBI" id="CHEBI:85959"/>
    </reaction>
</comment>
<comment type="catalytic activity">
    <reaction evidence="2">
        <text>an N(1)-methyladenosine in tRNA + 2-oxoglutarate + O2 = an adenosine in tRNA + formaldehyde + succinate + CO2</text>
        <dbReference type="Rhea" id="RHEA:54576"/>
        <dbReference type="Rhea" id="RHEA-COMP:10242"/>
        <dbReference type="Rhea" id="RHEA-COMP:12312"/>
        <dbReference type="ChEBI" id="CHEBI:15379"/>
        <dbReference type="ChEBI" id="CHEBI:16526"/>
        <dbReference type="ChEBI" id="CHEBI:16810"/>
        <dbReference type="ChEBI" id="CHEBI:16842"/>
        <dbReference type="ChEBI" id="CHEBI:30031"/>
        <dbReference type="ChEBI" id="CHEBI:74411"/>
        <dbReference type="ChEBI" id="CHEBI:74491"/>
    </reaction>
</comment>
<comment type="cofactor">
    <cofactor evidence="2">
        <name>Fe(2+)</name>
        <dbReference type="ChEBI" id="CHEBI:29033"/>
    </cofactor>
    <text evidence="2">Binds 1 Fe(2+) ion per subunit.</text>
</comment>
<comment type="activity regulation">
    <text evidence="1">Activated by ascorbate. Inhibited by N-oxalylglycine, fumarate and succinate.</text>
</comment>
<comment type="subunit">
    <text evidence="1">Monomer. May also exist as homodimer.</text>
</comment>
<comment type="subcellular location">
    <subcellularLocation>
        <location evidence="2">Nucleus</location>
    </subcellularLocation>
    <subcellularLocation>
        <location evidence="2">Nucleus speckle</location>
    </subcellularLocation>
    <subcellularLocation>
        <location evidence="2">Cytoplasm</location>
    </subcellularLocation>
    <text evidence="2">Localizes mainly in the nucleus, where it is able to demethylate N(6)-methyladenosine (m6A) and N(6),2'-O-dimethyladenosine cap (m6A(m)) in U6 small nuclear RNA (snRNA), N(1)-methyladenine from tRNAs and internal m6A in mRNAs. In the cytoplasm, mediates demethylation of m6A and m6A(m) in mRNAs and N(1)-methyladenine from tRNAs.</text>
</comment>
<comment type="tissue specificity">
    <text evidence="3 4">Ubiquitous (PubMed:17143547, PubMed:18218688). Highly expressed in teeth and weakly in bone (PubMed:17143547).</text>
</comment>
<comment type="induction">
    <text evidence="4">Up-regulated in the hypothalamus after 48 hours fasting.</text>
</comment>
<comment type="domain">
    <text evidence="2">The 3D-structure of the Fe2OG dioxygenase domain is similar to that of the Fe2OG dioxygenase domain found in the bacterial DNA repair dioxygenase alkB and its mammalian orthologs, but sequence similarity is very low. As a consequence, the domain is not detected by protein signature databases.</text>
</comment>
<comment type="similarity">
    <text evidence="6">Belongs to the fto family.</text>
</comment>